<keyword id="KW-0002">3D-structure</keyword>
<keyword id="KW-0966">Cell projection</keyword>
<keyword id="KW-0969">Cilium</keyword>
<keyword id="KW-0970">Cilium biogenesis/degradation</keyword>
<keyword id="KW-0175">Coiled coil</keyword>
<keyword id="KW-0963">Cytoplasm</keyword>
<keyword id="KW-0206">Cytoskeleton</keyword>
<keyword id="KW-0217">Developmental protein</keyword>
<keyword id="KW-0221">Differentiation</keyword>
<keyword id="KW-0282">Flagellum</keyword>
<keyword id="KW-1185">Reference proteome</keyword>
<keyword id="KW-0744">Spermatogenesis</keyword>
<accession>F1N7G5</accession>
<name>CFA53_BOVIN</name>
<dbReference type="RefSeq" id="NP_001291505.1">
    <property type="nucleotide sequence ID" value="NM_001304576.1"/>
</dbReference>
<dbReference type="PDB" id="7RRO">
    <property type="method" value="EM"/>
    <property type="resolution" value="3.40 A"/>
    <property type="chains" value="3/4=1-514"/>
</dbReference>
<dbReference type="PDB" id="8OTZ">
    <property type="method" value="EM"/>
    <property type="resolution" value="3.60 A"/>
    <property type="chains" value="AT/AU=1-514"/>
</dbReference>
<dbReference type="PDB" id="9CPB">
    <property type="method" value="EM"/>
    <property type="resolution" value="3.52 A"/>
    <property type="chains" value="2S/2T=1-514"/>
</dbReference>
<dbReference type="PDBsum" id="7RRO"/>
<dbReference type="PDBsum" id="8OTZ"/>
<dbReference type="PDBsum" id="9CPB"/>
<dbReference type="EMDB" id="EMD-17187"/>
<dbReference type="EMDB" id="EMD-24664"/>
<dbReference type="EMDB" id="EMD-45801"/>
<dbReference type="EMDB" id="EMD-50664"/>
<dbReference type="SMR" id="F1N7G5"/>
<dbReference type="FunCoup" id="F1N7G5">
    <property type="interactions" value="2630"/>
</dbReference>
<dbReference type="PaxDb" id="9913-ENSBTAP00000003444"/>
<dbReference type="GeneID" id="540193"/>
<dbReference type="KEGG" id="bta:540193"/>
<dbReference type="CTD" id="220136"/>
<dbReference type="VEuPathDB" id="HostDB:ENSBTAG00000003801"/>
<dbReference type="eggNOG" id="ENOG502QRDR">
    <property type="taxonomic scope" value="Eukaryota"/>
</dbReference>
<dbReference type="HOGENOM" id="CLU_036489_1_0_1"/>
<dbReference type="OMA" id="IQAQHND"/>
<dbReference type="OrthoDB" id="75950at2759"/>
<dbReference type="TreeFam" id="TF329393"/>
<dbReference type="Proteomes" id="UP000009136">
    <property type="component" value="Chromosome 24"/>
</dbReference>
<dbReference type="Bgee" id="ENSBTAG00000003801">
    <property type="expression patterns" value="Expressed in spermatid and 108 other cell types or tissues"/>
</dbReference>
<dbReference type="GO" id="GO:0160111">
    <property type="term" value="C:axonemal A tubule inner sheath"/>
    <property type="evidence" value="ECO:0000250"/>
    <property type="project" value="UniProtKB"/>
</dbReference>
<dbReference type="GO" id="GO:0005879">
    <property type="term" value="C:axonemal microtubule"/>
    <property type="evidence" value="ECO:0000314"/>
    <property type="project" value="UniProtKB"/>
</dbReference>
<dbReference type="GO" id="GO:0034451">
    <property type="term" value="C:centriolar satellite"/>
    <property type="evidence" value="ECO:0000250"/>
    <property type="project" value="UniProtKB"/>
</dbReference>
<dbReference type="GO" id="GO:0035869">
    <property type="term" value="C:ciliary transition zone"/>
    <property type="evidence" value="ECO:0000250"/>
    <property type="project" value="UniProtKB"/>
</dbReference>
<dbReference type="GO" id="GO:0002177">
    <property type="term" value="C:manchette"/>
    <property type="evidence" value="ECO:0000250"/>
    <property type="project" value="UniProtKB"/>
</dbReference>
<dbReference type="GO" id="GO:0036126">
    <property type="term" value="C:sperm flagellum"/>
    <property type="evidence" value="ECO:0000250"/>
    <property type="project" value="UniProtKB"/>
</dbReference>
<dbReference type="GO" id="GO:0000922">
    <property type="term" value="C:spindle pole"/>
    <property type="evidence" value="ECO:0000250"/>
    <property type="project" value="UniProtKB"/>
</dbReference>
<dbReference type="GO" id="GO:0060271">
    <property type="term" value="P:cilium assembly"/>
    <property type="evidence" value="ECO:0000250"/>
    <property type="project" value="UniProtKB"/>
</dbReference>
<dbReference type="GO" id="GO:0003341">
    <property type="term" value="P:cilium movement"/>
    <property type="evidence" value="ECO:0000250"/>
    <property type="project" value="UniProtKB"/>
</dbReference>
<dbReference type="GO" id="GO:0007368">
    <property type="term" value="P:determination of left/right symmetry"/>
    <property type="evidence" value="ECO:0000250"/>
    <property type="project" value="UniProtKB"/>
</dbReference>
<dbReference type="GO" id="GO:0030317">
    <property type="term" value="P:flagellated sperm motility"/>
    <property type="evidence" value="ECO:0000250"/>
    <property type="project" value="UniProtKB"/>
</dbReference>
<dbReference type="GO" id="GO:1905198">
    <property type="term" value="P:manchette assembly"/>
    <property type="evidence" value="ECO:0000250"/>
    <property type="project" value="UniProtKB"/>
</dbReference>
<dbReference type="GO" id="GO:0120316">
    <property type="term" value="P:sperm flagellum assembly"/>
    <property type="evidence" value="ECO:0000250"/>
    <property type="project" value="UniProtKB"/>
</dbReference>
<dbReference type="InterPro" id="IPR043596">
    <property type="entry name" value="CFAP53/TCHP"/>
</dbReference>
<dbReference type="InterPro" id="IPR043597">
    <property type="entry name" value="TPH_dom"/>
</dbReference>
<dbReference type="PANTHER" id="PTHR31183:SF1">
    <property type="entry name" value="CILIA- AND FLAGELLA-ASSOCIATED PROTEIN 53"/>
    <property type="match status" value="1"/>
</dbReference>
<dbReference type="PANTHER" id="PTHR31183">
    <property type="entry name" value="TRICHOPLEIN KERATIN FILAMENT-BINDING PROTEIN FAMILY MEMBER"/>
    <property type="match status" value="1"/>
</dbReference>
<dbReference type="Pfam" id="PF13868">
    <property type="entry name" value="TPH"/>
    <property type="match status" value="1"/>
</dbReference>
<sequence>MYSQRFGIVQREVKGPTPKVVIVRAKPPKGQGAEHHLQRIQHSHQKHHAILASIKSIERDRLKTEWDQHNDCKFVDSLVKARVKDAMQGFIINTEERRNKLRELLASEENEYFTEMQLKEETIEEKKDRMRDKIRLLREKKEKERQDFVAEKLDQQFRERCQELRAELFCIHQKAVCEERKAQIAFNEELKRQKVVEEQMFSKLWEEDRLAKERREAKEERRQKELVENTRLGLNAQVTSIQAQRQAAQRLKEEEALLVENENAQVKLENEQDKLKKQKTKQEIRAALQKALQEKMERMQQEYREEQDLNMKLMQNALQSLQEETDKKKQKKEDMRREQKIYYQYLAQRHEEEKAQEKELDRMLEKEKEKKFAEKDKELRLEKEARKQLLNEVMCTRKLQVQEKLQRKAKEQEERTMEQERINEGLKELNCEERENFIRRCSLAQEYRKQLQMQICSQQQAREAEEEEERREFEAGIAAEKSFQDKIQGILSTHQVVPRNIHPMRRACSTKLPP</sequence>
<reference key="1">
    <citation type="submission" date="2018-03" db="EMBL/GenBank/DDBJ databases">
        <title>ARS-UCD1.2.</title>
        <authorList>
            <person name="Rosen B.D."/>
            <person name="Bickhart D.M."/>
            <person name="Koren S."/>
            <person name="Schnabel R.D."/>
            <person name="Hall R."/>
            <person name="Zimin A."/>
            <person name="Dreischer C."/>
            <person name="Schultheiss S."/>
            <person name="Schroeder S.G."/>
            <person name="Elsik C.G."/>
            <person name="Couldrey C."/>
            <person name="Liu G.E."/>
            <person name="Van Tassell C.P."/>
            <person name="Phillippy A.M."/>
            <person name="Smith T.P.L."/>
            <person name="Medrano J.F."/>
        </authorList>
    </citation>
    <scope>NUCLEOTIDE SEQUENCE [LARGE SCALE GENOMIC DNA]</scope>
    <source>
        <strain evidence="7">Hereford</strain>
    </source>
</reference>
<reference evidence="8" key="2">
    <citation type="journal article" date="2021" name="Cell">
        <title>De novo identification of mammalian ciliary motility proteins using cryo-EM.</title>
        <authorList>
            <person name="Gui M."/>
            <person name="Farley H."/>
            <person name="Anujan P."/>
            <person name="Anderson J.R."/>
            <person name="Maxwell D.W."/>
            <person name="Whitchurch J.B."/>
            <person name="Botsch J.J."/>
            <person name="Qiu T."/>
            <person name="Meleppattu S."/>
            <person name="Singh S.K."/>
            <person name="Zhang Q."/>
            <person name="Thompson J."/>
            <person name="Lucas J.S."/>
            <person name="Bingle C.D."/>
            <person name="Norris D.P."/>
            <person name="Roy S."/>
            <person name="Brown A."/>
        </authorList>
    </citation>
    <scope>STRUCTURE BY ELECTRON MICROSCOPY (3.40 ANGSTROMS)</scope>
    <scope>INTERACTION WITH PIERCE1 AND PIERCE2</scope>
    <scope>SUBCELLULAR LOCATION</scope>
    <scope>FUNCTION</scope>
    <scope>TISSUE SPECIFICITY</scope>
</reference>
<reference evidence="9" key="3">
    <citation type="journal article" date="2023" name="Cell">
        <title>Structural specializations of the sperm tail.</title>
        <authorList>
            <person name="Leung M.R."/>
            <person name="Zeng J."/>
            <person name="Wang X."/>
            <person name="Roelofs M.C."/>
            <person name="Huang W."/>
            <person name="Zenezini Chiozzi R."/>
            <person name="Hevler J.F."/>
            <person name="Heck A.J.R."/>
            <person name="Dutcher S.K."/>
            <person name="Brown A."/>
            <person name="Zhang R."/>
            <person name="Zeev-Ben-Mordehai T."/>
        </authorList>
    </citation>
    <scope>STRUCTURE BY ELECTRON MICROSCOPY (3.60 ANGSTROMS)</scope>
    <scope>FUNCTION</scope>
    <scope>SUBUNIT</scope>
    <scope>SUBCELLULAR LOCATION</scope>
</reference>
<gene>
    <name type="primary">CFAP53</name>
    <name type="synonym">MBD1</name>
</gene>
<proteinExistence type="evidence at protein level"/>
<protein>
    <recommendedName>
        <fullName>Cilia- and flagella-associated protein 53</fullName>
    </recommendedName>
</protein>
<evidence type="ECO:0000250" key="1">
    <source>
        <dbReference type="UniProtKB" id="Q96M91"/>
    </source>
</evidence>
<evidence type="ECO:0000250" key="2">
    <source>
        <dbReference type="UniProtKB" id="Q9D439"/>
    </source>
</evidence>
<evidence type="ECO:0000255" key="3"/>
<evidence type="ECO:0000269" key="4">
    <source>
    </source>
</evidence>
<evidence type="ECO:0000269" key="5">
    <source>
    </source>
</evidence>
<evidence type="ECO:0000305" key="6"/>
<evidence type="ECO:0000312" key="7">
    <source>
        <dbReference type="Proteomes" id="UP000009136"/>
    </source>
</evidence>
<evidence type="ECO:0007744" key="8">
    <source>
        <dbReference type="PDB" id="7RRO"/>
    </source>
</evidence>
<evidence type="ECO:0007744" key="9">
    <source>
        <dbReference type="PDB" id="8OTZ"/>
    </source>
</evidence>
<comment type="function">
    <text evidence="1 2 4 5">Microtubule inner protein (MIP) part of the dynein-decorated doublet microtubules (DMTs) in cilia axoneme, which is required for motile cilia beating (PubMed:34715025, PubMed:37327785). Regulates motility patterns of both 9+0 and 9+2 motile cilia through differential localization and recruitment of axonemal dynein components (By similarity). Required for centriolar satellite integrity and non-motile cilium assembly (By similarity). Required for motile cilium formation (By similarity). Through its role in beating of primary cilia, involved in the establishment of organ laterality during embryogenesis (PubMed:34715025). Required for sperm flagellum biogenesis and is essential for male fertility (By similarity).</text>
</comment>
<comment type="subunit">
    <text evidence="1 2 4 5">Microtubule inner protein component of sperm flagellar doublet microtubules (PubMed:37327785). Interacts with PIERCE1 and PIERCE2; the interactions link outer dynein arms docking complex (ODA-DC) to the internal microtubule inner proteins (MIP) in cilium axoneme (PubMed:34715025). Interacts with CCDC38 (By similarity). Interacts with CCDC42 and IFT88 (By similarity). Interacts with centriolar satellite proteins PIBF1/CEP90 and PCM1 (By similarity). Interacts with dyneins DNAIC1, DNAIC2 AND DNAH11 and with ODA-DC component ODAD4/TTC25 (By similarity).</text>
</comment>
<comment type="subcellular location">
    <subcellularLocation>
        <location evidence="4">Cytoplasm</location>
        <location evidence="4">Cytoskeleton</location>
        <location evidence="4">Cilium axoneme</location>
    </subcellularLocation>
    <subcellularLocation>
        <location evidence="5">Cytoplasm</location>
        <location evidence="5">Cytoskeleton</location>
        <location evidence="5">Flagellum axoneme</location>
    </subcellularLocation>
    <subcellularLocation>
        <location evidence="2">Cytoplasm</location>
        <location evidence="2">Cytoskeleton</location>
        <location evidence="2">Microtubule organizing center</location>
        <location evidence="2">Centrosome</location>
        <location evidence="2">Centriolar satellite</location>
    </subcellularLocation>
    <subcellularLocation>
        <location evidence="1">Cytoplasm</location>
        <location evidence="1">Cytoskeleton</location>
        <location evidence="1">Spindle pole</location>
    </subcellularLocation>
    <subcellularLocation>
        <location evidence="2">Cytoplasm</location>
        <location evidence="2">Cytoskeleton</location>
    </subcellularLocation>
    <text evidence="1 2">In tracheal cell cilia, localizes prominently to both centriolar satellites and axonemes (By similarity). Tightly associated with microtubules in tracheal cilia (By similarity). In embryonic node cells, localizes to the base of the node cilia at the centriolar satellites and, to a lesser extent, to the cilium axoneme (By similarity). Localizes to centriolar satellites through G1, S phase, G2 and mitosis (By similarity). Enriched on the spindle poles in mitosis (By similarity). Relocalizes from the centriolar satellite to the ciliary transition zone upon ciliogenesis (By similarity). In skin fibroblast cells, locates predominantly to the centriole with much lower levels associated with the actin cytoskeleton (By similarity). Localizes to the sperm flagellum and manchette (By similarity).</text>
</comment>
<comment type="tissue specificity">
    <text evidence="4">Expressed in trachea multiciliated cells.</text>
</comment>
<comment type="similarity">
    <text evidence="6">Belongs to the CFAP53 family.</text>
</comment>
<organism evidence="7">
    <name type="scientific">Bos taurus</name>
    <name type="common">Bovine</name>
    <dbReference type="NCBI Taxonomy" id="9913"/>
    <lineage>
        <taxon>Eukaryota</taxon>
        <taxon>Metazoa</taxon>
        <taxon>Chordata</taxon>
        <taxon>Craniata</taxon>
        <taxon>Vertebrata</taxon>
        <taxon>Euteleostomi</taxon>
        <taxon>Mammalia</taxon>
        <taxon>Eutheria</taxon>
        <taxon>Laurasiatheria</taxon>
        <taxon>Artiodactyla</taxon>
        <taxon>Ruminantia</taxon>
        <taxon>Pecora</taxon>
        <taxon>Bovidae</taxon>
        <taxon>Bovinae</taxon>
        <taxon>Bos</taxon>
    </lineage>
</organism>
<feature type="chain" id="PRO_0000455519" description="Cilia- and flagella-associated protein 53">
    <location>
        <begin position="1"/>
        <end position="514"/>
    </location>
</feature>
<feature type="coiled-coil region" evidence="3">
    <location>
        <begin position="207"/>
        <end position="429"/>
    </location>
</feature>